<reference key="1">
    <citation type="journal article" date="1998" name="J. Mol. Endocrinol.">
        <title>Multiple GnRHs present in a teleost species are encoded by separate genes: analysis of the sbGnRH and cGnRH-II genes from the striped bass, Morone saxatilis.</title>
        <authorList>
            <person name="Chow M.M."/>
            <person name="Kight K.E."/>
            <person name="Gothilf Y."/>
            <person name="Alok D."/>
            <person name="Stubblefield J."/>
            <person name="Zohar Y."/>
        </authorList>
    </citation>
    <scope>NUCLEOTIDE SEQUENCE [GENOMIC DNA]</scope>
</reference>
<keyword id="KW-0027">Amidation</keyword>
<keyword id="KW-0165">Cleavage on pair of basic residues</keyword>
<keyword id="KW-0372">Hormone</keyword>
<keyword id="KW-0873">Pyrrolidone carboxylic acid</keyword>
<keyword id="KW-0964">Secreted</keyword>
<keyword id="KW-0732">Signal</keyword>
<protein>
    <recommendedName>
        <fullName>Progonadoliberin-2</fullName>
    </recommendedName>
    <alternativeName>
        <fullName>Progonadoliberin II</fullName>
    </alternativeName>
    <component>
        <recommendedName>
            <fullName>Gonadoliberin-2</fullName>
        </recommendedName>
        <alternativeName>
            <fullName>Gonadoliberin II</fullName>
        </alternativeName>
        <alternativeName>
            <fullName>Gonadotropin-releasing hormone II</fullName>
            <shortName>GnRH-II</shortName>
        </alternativeName>
        <alternativeName>
            <fullName>Luliberin II</fullName>
        </alternativeName>
        <alternativeName>
            <fullName>Luteinizing hormone-releasing hormone II</fullName>
            <shortName>LH-RH II</shortName>
        </alternativeName>
    </component>
    <component>
        <recommendedName>
            <fullName>GnRH-associated peptide 2</fullName>
        </recommendedName>
        <alternativeName>
            <fullName>GnRH-associated peptide II</fullName>
        </alternativeName>
    </component>
</protein>
<evidence type="ECO:0000250" key="1"/>
<evidence type="ECO:0000305" key="2"/>
<feature type="signal peptide" evidence="1">
    <location>
        <begin position="1"/>
        <end position="23"/>
    </location>
</feature>
<feature type="chain" id="PRO_0000012484" description="Progonadoliberin-2">
    <location>
        <begin position="24"/>
        <end position="85"/>
    </location>
</feature>
<feature type="peptide" id="PRO_0000012485" description="Gonadoliberin-2">
    <location>
        <begin position="24"/>
        <end position="33"/>
    </location>
</feature>
<feature type="peptide" id="PRO_0000012486" description="GnRH-associated peptide 2">
    <location>
        <begin position="37"/>
        <end position="85"/>
    </location>
</feature>
<feature type="modified residue" description="Pyrrolidone carboxylic acid" evidence="1">
    <location>
        <position position="24"/>
    </location>
</feature>
<feature type="modified residue" description="Glycine amide" evidence="1">
    <location>
        <position position="33"/>
    </location>
</feature>
<organism>
    <name type="scientific">Morone saxatilis</name>
    <name type="common">Striped bass</name>
    <name type="synonym">Perca saxatilis</name>
    <dbReference type="NCBI Taxonomy" id="34816"/>
    <lineage>
        <taxon>Eukaryota</taxon>
        <taxon>Metazoa</taxon>
        <taxon>Chordata</taxon>
        <taxon>Craniata</taxon>
        <taxon>Vertebrata</taxon>
        <taxon>Euteleostomi</taxon>
        <taxon>Actinopterygii</taxon>
        <taxon>Neopterygii</taxon>
        <taxon>Teleostei</taxon>
        <taxon>Neoteleostei</taxon>
        <taxon>Acanthomorphata</taxon>
        <taxon>Eupercaria</taxon>
        <taxon>Moronidae</taxon>
        <taxon>Morone</taxon>
    </lineage>
</organism>
<gene>
    <name type="primary">gnrh2</name>
</gene>
<sequence>MCVSRLVLLFGLLLCVGAQLSNAQHWSHGWYPGGKRELDSFGTSEISEEIKLCEAGECSYLRPQRRNVLRNIILDALARELQKRK</sequence>
<dbReference type="EMBL" id="AF056313">
    <property type="protein sequence ID" value="AAD03816.1"/>
    <property type="molecule type" value="Genomic_DNA"/>
</dbReference>
<dbReference type="RefSeq" id="XP_035518024.1">
    <property type="nucleotide sequence ID" value="XM_035662131.1"/>
</dbReference>
<dbReference type="GeneID" id="118328402"/>
<dbReference type="GO" id="GO:0005615">
    <property type="term" value="C:extracellular space"/>
    <property type="evidence" value="ECO:0000250"/>
    <property type="project" value="UniProtKB"/>
</dbReference>
<dbReference type="GO" id="GO:0005183">
    <property type="term" value="F:gonadotropin hormone-releasing hormone activity"/>
    <property type="evidence" value="ECO:0007669"/>
    <property type="project" value="TreeGrafter"/>
</dbReference>
<dbReference type="GO" id="GO:0031530">
    <property type="term" value="F:gonadotropin-releasing hormone receptor binding"/>
    <property type="evidence" value="ECO:0007669"/>
    <property type="project" value="TreeGrafter"/>
</dbReference>
<dbReference type="InterPro" id="IPR002012">
    <property type="entry name" value="GnRH"/>
</dbReference>
<dbReference type="InterPro" id="IPR019792">
    <property type="entry name" value="Gonadoliberin"/>
</dbReference>
<dbReference type="PANTHER" id="PTHR10522">
    <property type="entry name" value="GONADOLIBERIN"/>
    <property type="match status" value="1"/>
</dbReference>
<dbReference type="PANTHER" id="PTHR10522:SF8">
    <property type="entry name" value="PROGONADOLIBERIN"/>
    <property type="match status" value="1"/>
</dbReference>
<dbReference type="Pfam" id="PF00446">
    <property type="entry name" value="GnRH"/>
    <property type="match status" value="1"/>
</dbReference>
<dbReference type="PROSITE" id="PS00473">
    <property type="entry name" value="GNRH"/>
    <property type="match status" value="1"/>
</dbReference>
<proteinExistence type="inferred from homology"/>
<comment type="function">
    <text evidence="1">Stimulates the secretion of gonadotropins.</text>
</comment>
<comment type="subcellular location">
    <subcellularLocation>
        <location>Secreted</location>
    </subcellularLocation>
</comment>
<comment type="similarity">
    <text evidence="2">Belongs to the GnRH family.</text>
</comment>
<name>GON2_MORSA</name>
<accession>O73811</accession>